<keyword id="KW-0002">3D-structure</keyword>
<keyword id="KW-0007">Acetylation</keyword>
<keyword id="KW-0963">Cytoplasm</keyword>
<keyword id="KW-0903">Direct protein sequencing</keyword>
<keyword id="KW-0256">Endoplasmic reticulum</keyword>
<keyword id="KW-0539">Nucleus</keyword>
<keyword id="KW-0597">Phosphoprotein</keyword>
<keyword id="KW-1185">Reference proteome</keyword>
<keyword id="KW-0687">Ribonucleoprotein</keyword>
<keyword id="KW-0694">RNA-binding</keyword>
<keyword id="KW-0733">Signal recognition particle</keyword>
<accession>Q00004</accession>
<evidence type="ECO:0000250" key="1">
    <source>
        <dbReference type="UniProtKB" id="P38687"/>
    </source>
</evidence>
<evidence type="ECO:0000250" key="2">
    <source>
        <dbReference type="UniProtKB" id="Q9UHB9"/>
    </source>
</evidence>
<evidence type="ECO:0000256" key="3">
    <source>
        <dbReference type="SAM" id="MobiDB-lite"/>
    </source>
</evidence>
<evidence type="ECO:0000269" key="4">
    <source>
    </source>
</evidence>
<evidence type="ECO:0000269" key="5">
    <source>
    </source>
</evidence>
<evidence type="ECO:0000269" key="6">
    <source>
    </source>
</evidence>
<evidence type="ECO:0000305" key="7"/>
<name>SRP68_CANLF</name>
<gene>
    <name type="primary">SRP68</name>
</gene>
<dbReference type="EMBL" id="X53744">
    <property type="protein sequence ID" value="CAA37773.1"/>
    <property type="status" value="ALT_SEQ"/>
    <property type="molecule type" value="mRNA"/>
</dbReference>
<dbReference type="PIR" id="A58947">
    <property type="entry name" value="A58947"/>
</dbReference>
<dbReference type="RefSeq" id="NP_001003271.2">
    <property type="nucleotide sequence ID" value="NM_001003271.1"/>
</dbReference>
<dbReference type="PDB" id="4UE5">
    <property type="method" value="EM"/>
    <property type="resolution" value="9.00 A"/>
    <property type="chains" value="C=55-249"/>
</dbReference>
<dbReference type="PDB" id="6FRK">
    <property type="method" value="EM"/>
    <property type="resolution" value="3.70 A"/>
    <property type="chains" value="u=55-622"/>
</dbReference>
<dbReference type="PDB" id="6R6G">
    <property type="method" value="EM"/>
    <property type="resolution" value="3.70 A"/>
    <property type="chains" value="AI=55-249"/>
</dbReference>
<dbReference type="PDB" id="7OBQ">
    <property type="method" value="EM"/>
    <property type="resolution" value="3.90 A"/>
    <property type="chains" value="u=1-622"/>
</dbReference>
<dbReference type="PDB" id="7OBR">
    <property type="method" value="EM"/>
    <property type="resolution" value="2.80 A"/>
    <property type="chains" value="u=1-622"/>
</dbReference>
<dbReference type="PDBsum" id="4UE5"/>
<dbReference type="PDBsum" id="6FRK"/>
<dbReference type="PDBsum" id="6R6G"/>
<dbReference type="PDBsum" id="7OBQ"/>
<dbReference type="PDBsum" id="7OBR"/>
<dbReference type="EMDB" id="EMD-12799"/>
<dbReference type="EMDB" id="EMD-12801"/>
<dbReference type="EMDB" id="EMD-4300"/>
<dbReference type="EMDB" id="EMD-4735"/>
<dbReference type="SMR" id="Q00004"/>
<dbReference type="FunCoup" id="Q00004">
    <property type="interactions" value="3443"/>
</dbReference>
<dbReference type="STRING" id="9615.ENSCAFP00000007483"/>
<dbReference type="PaxDb" id="9612-ENSCAFP00000007483"/>
<dbReference type="Ensembl" id="ENSCAFT00040002094.1">
    <property type="protein sequence ID" value="ENSCAFP00040001787.1"/>
    <property type="gene ID" value="ENSCAFG00040001082.1"/>
</dbReference>
<dbReference type="GeneID" id="403952"/>
<dbReference type="KEGG" id="cfa:403952"/>
<dbReference type="CTD" id="6730"/>
<dbReference type="eggNOG" id="KOG2460">
    <property type="taxonomic scope" value="Eukaryota"/>
</dbReference>
<dbReference type="InParanoid" id="Q00004"/>
<dbReference type="OrthoDB" id="10255118at2759"/>
<dbReference type="Reactome" id="R-CFA-1799339">
    <property type="pathway name" value="SRP-dependent cotranslational protein targeting to membrane"/>
</dbReference>
<dbReference type="EvolutionaryTrace" id="Q00004"/>
<dbReference type="Proteomes" id="UP000002254">
    <property type="component" value="Unplaced"/>
</dbReference>
<dbReference type="Proteomes" id="UP000694429">
    <property type="component" value="Unplaced"/>
</dbReference>
<dbReference type="Proteomes" id="UP000694542">
    <property type="component" value="Chromosome 9"/>
</dbReference>
<dbReference type="Proteomes" id="UP000805418">
    <property type="component" value="Unplaced"/>
</dbReference>
<dbReference type="GO" id="GO:0005829">
    <property type="term" value="C:cytosol"/>
    <property type="evidence" value="ECO:0000304"/>
    <property type="project" value="Reactome"/>
</dbReference>
<dbReference type="GO" id="GO:0005783">
    <property type="term" value="C:endoplasmic reticulum"/>
    <property type="evidence" value="ECO:0007669"/>
    <property type="project" value="UniProtKB-SubCell"/>
</dbReference>
<dbReference type="GO" id="GO:0005730">
    <property type="term" value="C:nucleolus"/>
    <property type="evidence" value="ECO:0007669"/>
    <property type="project" value="UniProtKB-SubCell"/>
</dbReference>
<dbReference type="GO" id="GO:0005786">
    <property type="term" value="C:signal recognition particle, endoplasmic reticulum targeting"/>
    <property type="evidence" value="ECO:0000318"/>
    <property type="project" value="GO_Central"/>
</dbReference>
<dbReference type="GO" id="GO:0008312">
    <property type="term" value="F:7S RNA binding"/>
    <property type="evidence" value="ECO:0007669"/>
    <property type="project" value="InterPro"/>
</dbReference>
<dbReference type="GO" id="GO:0030942">
    <property type="term" value="F:endoplasmic reticulum signal peptide binding"/>
    <property type="evidence" value="ECO:0007669"/>
    <property type="project" value="InterPro"/>
</dbReference>
<dbReference type="GO" id="GO:0005047">
    <property type="term" value="F:signal recognition particle binding"/>
    <property type="evidence" value="ECO:0000318"/>
    <property type="project" value="GO_Central"/>
</dbReference>
<dbReference type="GO" id="GO:0006614">
    <property type="term" value="P:SRP-dependent cotranslational protein targeting to membrane"/>
    <property type="evidence" value="ECO:0000318"/>
    <property type="project" value="GO_Central"/>
</dbReference>
<dbReference type="CDD" id="cd15481">
    <property type="entry name" value="SRP68-RBD"/>
    <property type="match status" value="1"/>
</dbReference>
<dbReference type="FunFam" id="1.10.3450.40:FF:000001">
    <property type="entry name" value="Signal recognition particle subunit SRP68"/>
    <property type="match status" value="1"/>
</dbReference>
<dbReference type="Gene3D" id="1.10.3450.40">
    <property type="entry name" value="Signal recognition particle, SRP68 subunit, RNA-binding domain"/>
    <property type="match status" value="1"/>
</dbReference>
<dbReference type="InterPro" id="IPR026258">
    <property type="entry name" value="SRP68"/>
</dbReference>
<dbReference type="InterPro" id="IPR034652">
    <property type="entry name" value="SRP68-RBD"/>
</dbReference>
<dbReference type="InterPro" id="IPR038253">
    <property type="entry name" value="SRP68_N_sf"/>
</dbReference>
<dbReference type="PANTHER" id="PTHR12860">
    <property type="entry name" value="SIGNAL RECOGNITION PARTICLE 68 KDA PROTEIN"/>
    <property type="match status" value="1"/>
</dbReference>
<dbReference type="PANTHER" id="PTHR12860:SF0">
    <property type="entry name" value="SIGNAL RECOGNITION PARTICLE SUBUNIT SRP68"/>
    <property type="match status" value="1"/>
</dbReference>
<dbReference type="Pfam" id="PF16969">
    <property type="entry name" value="SRP68"/>
    <property type="match status" value="1"/>
</dbReference>
<dbReference type="PIRSF" id="PIRSF038995">
    <property type="entry name" value="SRP68"/>
    <property type="match status" value="1"/>
</dbReference>
<reference key="1">
    <citation type="journal article" date="1990" name="FEBS Lett.">
        <title>The 68 kDa protein of signal recognition particle contains a glycine-rich region also found in certain RNA-binding proteins.</title>
        <authorList>
            <person name="Herz J."/>
            <person name="Flint N."/>
            <person name="Stanley K."/>
            <person name="Frank R."/>
            <person name="Dobberstein B."/>
        </authorList>
    </citation>
    <scope>NUCLEOTIDE SEQUENCE [MRNA]</scope>
    <scope>PARTIAL PROTEIN SEQUENCE</scope>
    <source>
        <strain>Cocker spaniel</strain>
        <tissue>Kidney</tissue>
    </source>
</reference>
<reference key="2">
    <citation type="journal article" date="1980" name="Proc. Natl. Acad. Sci. U.S.A.">
        <title>Purification of a membrane-associated protein complex required for protein translocation across the endoplasmic reticulum.</title>
        <authorList>
            <person name="Walter P."/>
            <person name="Blobel G."/>
        </authorList>
    </citation>
    <scope>FUNCTION</scope>
    <scope>IDENTIFICATION IN A SIGNAL RECOGNITION PARTICLE COMPLEX</scope>
</reference>
<reference key="3">
    <citation type="journal article" date="1983" name="Cell">
        <title>Disassembly and reconstitution of signal recognition particle.</title>
        <authorList>
            <person name="Walter P."/>
            <person name="Blobel G."/>
        </authorList>
    </citation>
    <scope>FUNCTION</scope>
    <scope>SUBUNIT</scope>
    <scope>INTERACTION WITH SRP72</scope>
</reference>
<reference key="4">
    <citation type="journal article" date="1993" name="J. Cell Biol.">
        <title>Assembly of the 68- and 72-kD proteins of signal recognition particle with 7S RNA.</title>
        <authorList>
            <person name="Luetcke H."/>
            <person name="Prehn S."/>
            <person name="Ashford A.J."/>
            <person name="Remus M."/>
            <person name="Frank R."/>
            <person name="Dobberstein B."/>
        </authorList>
    </citation>
    <scope>FUNCTION</scope>
    <scope>RNA BINDING</scope>
    <scope>SUBUNIT</scope>
    <scope>INTERACTION WITH SRP72</scope>
    <scope>MUTAGENESIS OF 564-THR--SER-622</scope>
    <source>
        <strain>Cocker spaniel</strain>
        <tissue>Kidney</tissue>
    </source>
</reference>
<sequence>MAAEKQVPGGGGGGGGGGGGGGGSGGGRGAGGEENKENERPSAGSKANREFGDSLSLEILQIIKESQQQHGLRHGDFQRYRGYCSRRQRRLRKTLNFKMGNRHKFTGKKVTEDLLTDNRYLLLVLMDAERAWSYAMQLKQEANTEPRKRFHLLSRLRKAVKHAEELERLCESNRVDAKTKLEAQAYTAYLSGMLRFEHQEWKAAIEAFNKCKTIYEKLASAFTEEQAVLYNQRVEEISPNIRYCAYNIGDQSAINELMQMRLRSGGTEGLLAEKLEALITQTRAKQAATMSEVEWRGRTVPVKIDKVRIFLLGLADNEAAIAQAESEETKERLFESMLSECRDAIQAVREELKPDQKQRDYTLDGESGKVSNLQYLHSYLTYIKLSTAIRRNENMAKGLQKALQQQPEDESKRSPRPQDLIRLYDIILQNLVELLQLPGLEEDRAFQKEIGLKTLVFKAYRCFFIAQSYVLVKKWSEALVLYDRVLKYANEVNSDAGAFRNSLKDLPDVQELITQVRSEKCSLQAAAILDASDSHQPETSSQVKDNKPLVERFETFCLDPSLVTKQANLVHFPPGFQPIPCKPLFFDLALNHVAFPPLEDKLEQKTKSGLTGYIKGIFGFRS</sequence>
<feature type="chain" id="PRO_0000135226" description="Signal recognition particle subunit SRP68">
    <location>
        <begin position="1"/>
        <end position="622"/>
    </location>
</feature>
<feature type="region of interest" description="RNA-binding" evidence="6">
    <location>
        <begin position="1"/>
        <end position="231"/>
    </location>
</feature>
<feature type="region of interest" description="Disordered" evidence="3">
    <location>
        <begin position="1"/>
        <end position="50"/>
    </location>
</feature>
<feature type="region of interest" description="Required for interaction with SRP72" evidence="6">
    <location>
        <begin position="564"/>
        <end position="592"/>
    </location>
</feature>
<feature type="compositionally biased region" description="Gly residues" evidence="3">
    <location>
        <begin position="8"/>
        <end position="30"/>
    </location>
</feature>
<feature type="compositionally biased region" description="Basic and acidic residues" evidence="3">
    <location>
        <begin position="31"/>
        <end position="40"/>
    </location>
</feature>
<feature type="modified residue" description="Phosphoserine" evidence="2">
    <location>
        <position position="45"/>
    </location>
</feature>
<feature type="modified residue" description="Phosphoserine" evidence="2">
    <location>
        <position position="238"/>
    </location>
</feature>
<feature type="modified residue" description="N6-acetyllysine" evidence="2">
    <location>
        <position position="448"/>
    </location>
</feature>
<feature type="mutagenesis site" description="Abolishes the interaction with SRP72." evidence="6">
    <location>
        <begin position="564"/>
        <end position="622"/>
    </location>
</feature>
<comment type="function">
    <text evidence="1 2 4 5 6">Component of the signal recognition particle (SRP) complex, a ribonucleoprotein complex that mediates the cotranslational targeting of secretory and membrane proteins to the endoplasmic reticulum (ER) (PubMed:6413076, PubMed:6938958). The SRP complex interacts with the signal sequence in nascent secretory and membrane proteins and directs them to the membrane of the ER (PubMed:6413076, PubMed:6938958). The SRP complex targets the ribosome-nascent chain complex to the SRP receptor (SR), which is anchored in the ER, where SR compaction and GTPase rearrangement drive cotranslational protein translocation into the ER (By similarity). Binds the signal recognition particle RNA (7S RNA), SRP72 binds to this complex subsequently (PubMed:8388879). The SRP complex possibly participates in the elongation arrest function (By similarity).</text>
</comment>
<comment type="subunit">
    <text evidence="4 5 6">Heterodimer with SRP72 (PubMed:6413076, PubMed:8388879). SRP68/SRP72 heterodimer formation is stabilized by the presence of 7SL RNA (PubMed:6413076, PubMed:8388879). Component of a signal recognition particle complex that consists of a 7SL RNA molecule of 300 nucleotides and six protein subunits: SRP72, SRP68, SRP54, SRP19, SRP14 and SRP9 (PubMed:6413076, PubMed:6938958). Within the SRP complex, interacts (via C-terminus) with SRP72 (PubMed:6413076, PubMed:8388879).</text>
</comment>
<comment type="subcellular location">
    <subcellularLocation>
        <location evidence="2">Cytoplasm</location>
    </subcellularLocation>
    <subcellularLocation>
        <location evidence="2">Nucleus</location>
        <location evidence="2">Nucleolus</location>
    </subcellularLocation>
    <subcellularLocation>
        <location evidence="2">Endoplasmic reticulum</location>
    </subcellularLocation>
</comment>
<comment type="domain">
    <text evidence="2">The N-terminus is required for RNA-binding.</text>
</comment>
<comment type="similarity">
    <text evidence="7">Belongs to the SRP68 family.</text>
</comment>
<comment type="caution">
    <text evidence="7">Some authors found genomic clones that have 9 or 12 consecutive glycine residues instead of 15 (AA 9-27).</text>
</comment>
<comment type="sequence caution" evidence="7">
    <conflict type="miscellaneous discrepancy">
        <sequence resource="EMBL-CDS" id="CAA37773"/>
    </conflict>
    <text>Sequence encodes 9 consecutive glycine residues instead of 15 (AA 9-23).</text>
</comment>
<proteinExistence type="evidence at protein level"/>
<protein>
    <recommendedName>
        <fullName>Signal recognition particle subunit SRP68</fullName>
        <shortName>SRP68</shortName>
    </recommendedName>
    <alternativeName>
        <fullName>Signal recognition particle 68 kDa protein</fullName>
    </alternativeName>
</protein>
<organism>
    <name type="scientific">Canis lupus familiaris</name>
    <name type="common">Dog</name>
    <name type="synonym">Canis familiaris</name>
    <dbReference type="NCBI Taxonomy" id="9615"/>
    <lineage>
        <taxon>Eukaryota</taxon>
        <taxon>Metazoa</taxon>
        <taxon>Chordata</taxon>
        <taxon>Craniata</taxon>
        <taxon>Vertebrata</taxon>
        <taxon>Euteleostomi</taxon>
        <taxon>Mammalia</taxon>
        <taxon>Eutheria</taxon>
        <taxon>Laurasiatheria</taxon>
        <taxon>Carnivora</taxon>
        <taxon>Caniformia</taxon>
        <taxon>Canidae</taxon>
        <taxon>Canis</taxon>
    </lineage>
</organism>